<protein>
    <recommendedName>
        <fullName evidence="1">Protease HtpX</fullName>
        <ecNumber evidence="1">3.4.24.-</ecNumber>
    </recommendedName>
    <alternativeName>
        <fullName evidence="1">Heat shock protein HtpX</fullName>
    </alternativeName>
</protein>
<sequence>MKRIALFLATNLAVMIVFSIVLNIVYAVTGIQQGSLSGLLVMAVLFGFGGSLISLMMSKSMALRSVGGEVIEQPRNETEHWLLETVSRQAQQVGIGMPTVAIYDSPDMNAFATGAKRDDSLVAVSTGLLHSMTRDEAEAVLAHEVSHIANGDMITMTLMQGVVNTFVIFLSRMIANAVSGFTSSDEEGEGEGGSFMTYFIVSTVLELAFGFLASFLTMWFSRHREFHADAGAAQLVGKQKMIAALERLRMGQESQLEGSMMAFGINGKKSLTELLMSHPPLEKRIDALRQM</sequence>
<evidence type="ECO:0000255" key="1">
    <source>
        <dbReference type="HAMAP-Rule" id="MF_00188"/>
    </source>
</evidence>
<dbReference type="EC" id="3.4.24.-" evidence="1"/>
<dbReference type="EMBL" id="CP000020">
    <property type="protein sequence ID" value="AAW85647.1"/>
    <property type="molecule type" value="Genomic_DNA"/>
</dbReference>
<dbReference type="RefSeq" id="WP_005418976.1">
    <property type="nucleotide sequence ID" value="NZ_CAWLES010000001.1"/>
</dbReference>
<dbReference type="RefSeq" id="YP_204535.1">
    <property type="nucleotide sequence ID" value="NC_006840.2"/>
</dbReference>
<dbReference type="SMR" id="Q5E5P9"/>
<dbReference type="STRING" id="312309.VF_1152"/>
<dbReference type="MEROPS" id="M48.002"/>
<dbReference type="EnsemblBacteria" id="AAW85647">
    <property type="protein sequence ID" value="AAW85647"/>
    <property type="gene ID" value="VF_1152"/>
</dbReference>
<dbReference type="GeneID" id="54163823"/>
<dbReference type="KEGG" id="vfi:VF_1152"/>
<dbReference type="PATRIC" id="fig|312309.11.peg.1159"/>
<dbReference type="eggNOG" id="COG0501">
    <property type="taxonomic scope" value="Bacteria"/>
</dbReference>
<dbReference type="HOGENOM" id="CLU_042266_1_0_6"/>
<dbReference type="OrthoDB" id="15218at2"/>
<dbReference type="Proteomes" id="UP000000537">
    <property type="component" value="Chromosome I"/>
</dbReference>
<dbReference type="GO" id="GO:0005886">
    <property type="term" value="C:plasma membrane"/>
    <property type="evidence" value="ECO:0007669"/>
    <property type="project" value="UniProtKB-SubCell"/>
</dbReference>
<dbReference type="GO" id="GO:0004222">
    <property type="term" value="F:metalloendopeptidase activity"/>
    <property type="evidence" value="ECO:0007669"/>
    <property type="project" value="UniProtKB-UniRule"/>
</dbReference>
<dbReference type="GO" id="GO:0008270">
    <property type="term" value="F:zinc ion binding"/>
    <property type="evidence" value="ECO:0007669"/>
    <property type="project" value="UniProtKB-UniRule"/>
</dbReference>
<dbReference type="GO" id="GO:0006508">
    <property type="term" value="P:proteolysis"/>
    <property type="evidence" value="ECO:0007669"/>
    <property type="project" value="UniProtKB-KW"/>
</dbReference>
<dbReference type="CDD" id="cd07335">
    <property type="entry name" value="M48B_HtpX_like"/>
    <property type="match status" value="1"/>
</dbReference>
<dbReference type="FunFam" id="3.30.2010.10:FF:000001">
    <property type="entry name" value="Protease HtpX"/>
    <property type="match status" value="1"/>
</dbReference>
<dbReference type="Gene3D" id="3.30.2010.10">
    <property type="entry name" value="Metalloproteases ('zincins'), catalytic domain"/>
    <property type="match status" value="1"/>
</dbReference>
<dbReference type="HAMAP" id="MF_00188">
    <property type="entry name" value="Pept_M48_protease_HtpX"/>
    <property type="match status" value="1"/>
</dbReference>
<dbReference type="InterPro" id="IPR050083">
    <property type="entry name" value="HtpX_protease"/>
</dbReference>
<dbReference type="InterPro" id="IPR022919">
    <property type="entry name" value="Pept_M48_protease_HtpX"/>
</dbReference>
<dbReference type="InterPro" id="IPR001915">
    <property type="entry name" value="Peptidase_M48"/>
</dbReference>
<dbReference type="NCBIfam" id="NF003965">
    <property type="entry name" value="PRK05457.1"/>
    <property type="match status" value="1"/>
</dbReference>
<dbReference type="PANTHER" id="PTHR43221">
    <property type="entry name" value="PROTEASE HTPX"/>
    <property type="match status" value="1"/>
</dbReference>
<dbReference type="PANTHER" id="PTHR43221:SF1">
    <property type="entry name" value="PROTEASE HTPX"/>
    <property type="match status" value="1"/>
</dbReference>
<dbReference type="Pfam" id="PF01435">
    <property type="entry name" value="Peptidase_M48"/>
    <property type="match status" value="1"/>
</dbReference>
<name>HTPX_ALIF1</name>
<proteinExistence type="inferred from homology"/>
<gene>
    <name evidence="1" type="primary">htpX</name>
    <name type="ordered locus">VF_1152</name>
</gene>
<reference key="1">
    <citation type="journal article" date="2005" name="Proc. Natl. Acad. Sci. U.S.A.">
        <title>Complete genome sequence of Vibrio fischeri: a symbiotic bacterium with pathogenic congeners.</title>
        <authorList>
            <person name="Ruby E.G."/>
            <person name="Urbanowski M."/>
            <person name="Campbell J."/>
            <person name="Dunn A."/>
            <person name="Faini M."/>
            <person name="Gunsalus R."/>
            <person name="Lostroh P."/>
            <person name="Lupp C."/>
            <person name="McCann J."/>
            <person name="Millikan D."/>
            <person name="Schaefer A."/>
            <person name="Stabb E."/>
            <person name="Stevens A."/>
            <person name="Visick K."/>
            <person name="Whistler C."/>
            <person name="Greenberg E.P."/>
        </authorList>
    </citation>
    <scope>NUCLEOTIDE SEQUENCE [LARGE SCALE GENOMIC DNA]</scope>
    <source>
        <strain>ATCC 700601 / ES114</strain>
    </source>
</reference>
<organism>
    <name type="scientific">Aliivibrio fischeri (strain ATCC 700601 / ES114)</name>
    <name type="common">Vibrio fischeri</name>
    <dbReference type="NCBI Taxonomy" id="312309"/>
    <lineage>
        <taxon>Bacteria</taxon>
        <taxon>Pseudomonadati</taxon>
        <taxon>Pseudomonadota</taxon>
        <taxon>Gammaproteobacteria</taxon>
        <taxon>Vibrionales</taxon>
        <taxon>Vibrionaceae</taxon>
        <taxon>Aliivibrio</taxon>
    </lineage>
</organism>
<feature type="chain" id="PRO_1000020966" description="Protease HtpX">
    <location>
        <begin position="1"/>
        <end position="291"/>
    </location>
</feature>
<feature type="transmembrane region" description="Helical" evidence="1">
    <location>
        <begin position="4"/>
        <end position="24"/>
    </location>
</feature>
<feature type="transmembrane region" description="Helical" evidence="1">
    <location>
        <begin position="36"/>
        <end position="56"/>
    </location>
</feature>
<feature type="transmembrane region" description="Helical" evidence="1">
    <location>
        <begin position="151"/>
        <end position="171"/>
    </location>
</feature>
<feature type="transmembrane region" description="Helical" evidence="1">
    <location>
        <begin position="199"/>
        <end position="219"/>
    </location>
</feature>
<feature type="active site" evidence="1">
    <location>
        <position position="144"/>
    </location>
</feature>
<feature type="binding site" evidence="1">
    <location>
        <position position="143"/>
    </location>
    <ligand>
        <name>Zn(2+)</name>
        <dbReference type="ChEBI" id="CHEBI:29105"/>
        <note>catalytic</note>
    </ligand>
</feature>
<feature type="binding site" evidence="1">
    <location>
        <position position="147"/>
    </location>
    <ligand>
        <name>Zn(2+)</name>
        <dbReference type="ChEBI" id="CHEBI:29105"/>
        <note>catalytic</note>
    </ligand>
</feature>
<feature type="binding site" evidence="1">
    <location>
        <position position="225"/>
    </location>
    <ligand>
        <name>Zn(2+)</name>
        <dbReference type="ChEBI" id="CHEBI:29105"/>
        <note>catalytic</note>
    </ligand>
</feature>
<keyword id="KW-0997">Cell inner membrane</keyword>
<keyword id="KW-1003">Cell membrane</keyword>
<keyword id="KW-0378">Hydrolase</keyword>
<keyword id="KW-0472">Membrane</keyword>
<keyword id="KW-0479">Metal-binding</keyword>
<keyword id="KW-0482">Metalloprotease</keyword>
<keyword id="KW-0645">Protease</keyword>
<keyword id="KW-1185">Reference proteome</keyword>
<keyword id="KW-0812">Transmembrane</keyword>
<keyword id="KW-1133">Transmembrane helix</keyword>
<keyword id="KW-0862">Zinc</keyword>
<comment type="cofactor">
    <cofactor evidence="1">
        <name>Zn(2+)</name>
        <dbReference type="ChEBI" id="CHEBI:29105"/>
    </cofactor>
    <text evidence="1">Binds 1 zinc ion per subunit.</text>
</comment>
<comment type="subcellular location">
    <subcellularLocation>
        <location evidence="1">Cell inner membrane</location>
        <topology evidence="1">Multi-pass membrane protein</topology>
    </subcellularLocation>
</comment>
<comment type="similarity">
    <text evidence="1">Belongs to the peptidase M48B family.</text>
</comment>
<accession>Q5E5P9</accession>